<protein>
    <recommendedName>
        <fullName evidence="1">Acetyl-coenzyme A carboxylase carboxyl transferase subunit beta</fullName>
        <shortName evidence="1">ACCase subunit beta</shortName>
        <shortName evidence="1">Acetyl-CoA carboxylase carboxyltransferase subunit beta</shortName>
        <ecNumber evidence="1">2.1.3.15</ecNumber>
    </recommendedName>
</protein>
<proteinExistence type="inferred from homology"/>
<evidence type="ECO:0000255" key="1">
    <source>
        <dbReference type="HAMAP-Rule" id="MF_01395"/>
    </source>
</evidence>
<evidence type="ECO:0000255" key="2">
    <source>
        <dbReference type="PROSITE-ProRule" id="PRU01136"/>
    </source>
</evidence>
<name>ACCD_FLAPJ</name>
<gene>
    <name evidence="1" type="primary">accD</name>
    <name type="ordered locus">FP0322</name>
</gene>
<accession>A6GWG2</accession>
<sequence>MSWFKRKEKGITTATEDKMDVPKGLWYKSPTGKIIDAEELARNLWVSPEDDFHVRIGSAEYFHILFDNNEFTELDANMTSKDPLGFVDTKKYADRLVDVMQKTKLKDAVRTAVGKSKGRDLVICCMDFAFIGGSMGAVVGEKIARGIDHSIKNKIPFVMISKSGGARMMEAAYSLMQLAKTSAKLAQLAEAKIPYISLCTDPTTGGTTASYAMLGDINISEPGALIGFAGPRVVRDTTGKDLPEGFQTAEFVLEHGFLDFITPRKELKDKINLYLDLILNNEVR</sequence>
<organism>
    <name type="scientific">Flavobacterium psychrophilum (strain ATCC 49511 / DSM 21280 / CIP 103535 / JIP02/86)</name>
    <dbReference type="NCBI Taxonomy" id="402612"/>
    <lineage>
        <taxon>Bacteria</taxon>
        <taxon>Pseudomonadati</taxon>
        <taxon>Bacteroidota</taxon>
        <taxon>Flavobacteriia</taxon>
        <taxon>Flavobacteriales</taxon>
        <taxon>Flavobacteriaceae</taxon>
        <taxon>Flavobacterium</taxon>
    </lineage>
</organism>
<feature type="chain" id="PRO_0000389744" description="Acetyl-coenzyme A carboxylase carboxyl transferase subunit beta">
    <location>
        <begin position="1"/>
        <end position="284"/>
    </location>
</feature>
<feature type="domain" description="CoA carboxyltransferase N-terminal" evidence="2">
    <location>
        <begin position="24"/>
        <end position="284"/>
    </location>
</feature>
<reference key="1">
    <citation type="journal article" date="2007" name="Nat. Biotechnol.">
        <title>Complete genome sequence of the fish pathogen Flavobacterium psychrophilum.</title>
        <authorList>
            <person name="Duchaud E."/>
            <person name="Boussaha M."/>
            <person name="Loux V."/>
            <person name="Bernardet J.-F."/>
            <person name="Michel C."/>
            <person name="Kerouault B."/>
            <person name="Mondot S."/>
            <person name="Nicolas P."/>
            <person name="Bossy R."/>
            <person name="Caron C."/>
            <person name="Bessieres P."/>
            <person name="Gibrat J.-F."/>
            <person name="Claverol S."/>
            <person name="Dumetz F."/>
            <person name="Le Henaff M."/>
            <person name="Benmansour A."/>
        </authorList>
    </citation>
    <scope>NUCLEOTIDE SEQUENCE [LARGE SCALE GENOMIC DNA]</scope>
    <source>
        <strain>ATCC 49511 / DSM 21280 / CIP 103535 / JIP02/86</strain>
    </source>
</reference>
<dbReference type="EC" id="2.1.3.15" evidence="1"/>
<dbReference type="EMBL" id="AM398681">
    <property type="protein sequence ID" value="CAL42435.1"/>
    <property type="molecule type" value="Genomic_DNA"/>
</dbReference>
<dbReference type="RefSeq" id="WP_011962493.1">
    <property type="nucleotide sequence ID" value="NC_009613.3"/>
</dbReference>
<dbReference type="RefSeq" id="YP_001295253.1">
    <property type="nucleotide sequence ID" value="NC_009613.3"/>
</dbReference>
<dbReference type="SMR" id="A6GWG2"/>
<dbReference type="STRING" id="402612.FP0322"/>
<dbReference type="EnsemblBacteria" id="CAL42435">
    <property type="protein sequence ID" value="CAL42435"/>
    <property type="gene ID" value="FP0322"/>
</dbReference>
<dbReference type="GeneID" id="66551456"/>
<dbReference type="KEGG" id="fps:FP0322"/>
<dbReference type="PATRIC" id="fig|402612.5.peg.333"/>
<dbReference type="eggNOG" id="COG0777">
    <property type="taxonomic scope" value="Bacteria"/>
</dbReference>
<dbReference type="HOGENOM" id="CLU_015486_1_1_10"/>
<dbReference type="OrthoDB" id="9772975at2"/>
<dbReference type="UniPathway" id="UPA00655">
    <property type="reaction ID" value="UER00711"/>
</dbReference>
<dbReference type="Proteomes" id="UP000006394">
    <property type="component" value="Chromosome"/>
</dbReference>
<dbReference type="GO" id="GO:0009317">
    <property type="term" value="C:acetyl-CoA carboxylase complex"/>
    <property type="evidence" value="ECO:0007669"/>
    <property type="project" value="InterPro"/>
</dbReference>
<dbReference type="GO" id="GO:0003989">
    <property type="term" value="F:acetyl-CoA carboxylase activity"/>
    <property type="evidence" value="ECO:0007669"/>
    <property type="project" value="InterPro"/>
</dbReference>
<dbReference type="GO" id="GO:0005524">
    <property type="term" value="F:ATP binding"/>
    <property type="evidence" value="ECO:0007669"/>
    <property type="project" value="UniProtKB-KW"/>
</dbReference>
<dbReference type="GO" id="GO:0016743">
    <property type="term" value="F:carboxyl- or carbamoyltransferase activity"/>
    <property type="evidence" value="ECO:0007669"/>
    <property type="project" value="UniProtKB-UniRule"/>
</dbReference>
<dbReference type="GO" id="GO:0006633">
    <property type="term" value="P:fatty acid biosynthetic process"/>
    <property type="evidence" value="ECO:0007669"/>
    <property type="project" value="UniProtKB-KW"/>
</dbReference>
<dbReference type="GO" id="GO:2001295">
    <property type="term" value="P:malonyl-CoA biosynthetic process"/>
    <property type="evidence" value="ECO:0007669"/>
    <property type="project" value="UniProtKB-UniRule"/>
</dbReference>
<dbReference type="Gene3D" id="3.90.226.10">
    <property type="entry name" value="2-enoyl-CoA Hydratase, Chain A, domain 1"/>
    <property type="match status" value="1"/>
</dbReference>
<dbReference type="HAMAP" id="MF_01395">
    <property type="entry name" value="AcetylCoA_CT_beta"/>
    <property type="match status" value="1"/>
</dbReference>
<dbReference type="InterPro" id="IPR034733">
    <property type="entry name" value="AcCoA_carboxyl_beta"/>
</dbReference>
<dbReference type="InterPro" id="IPR000438">
    <property type="entry name" value="Acetyl_CoA_COase_Trfase_b_su"/>
</dbReference>
<dbReference type="InterPro" id="IPR029045">
    <property type="entry name" value="ClpP/crotonase-like_dom_sf"/>
</dbReference>
<dbReference type="InterPro" id="IPR011762">
    <property type="entry name" value="COA_CT_N"/>
</dbReference>
<dbReference type="NCBIfam" id="TIGR00515">
    <property type="entry name" value="accD"/>
    <property type="match status" value="1"/>
</dbReference>
<dbReference type="PANTHER" id="PTHR42995">
    <property type="entry name" value="ACETYL-COENZYME A CARBOXYLASE CARBOXYL TRANSFERASE SUBUNIT BETA, CHLOROPLASTIC"/>
    <property type="match status" value="1"/>
</dbReference>
<dbReference type="PANTHER" id="PTHR42995:SF5">
    <property type="entry name" value="ACETYL-COENZYME A CARBOXYLASE CARBOXYL TRANSFERASE SUBUNIT BETA, CHLOROPLASTIC"/>
    <property type="match status" value="1"/>
</dbReference>
<dbReference type="Pfam" id="PF01039">
    <property type="entry name" value="Carboxyl_trans"/>
    <property type="match status" value="1"/>
</dbReference>
<dbReference type="PRINTS" id="PR01070">
    <property type="entry name" value="ACCCTRFRASEB"/>
</dbReference>
<dbReference type="SUPFAM" id="SSF52096">
    <property type="entry name" value="ClpP/crotonase"/>
    <property type="match status" value="1"/>
</dbReference>
<dbReference type="PROSITE" id="PS50980">
    <property type="entry name" value="COA_CT_NTER"/>
    <property type="match status" value="1"/>
</dbReference>
<keyword id="KW-0067">ATP-binding</keyword>
<keyword id="KW-0963">Cytoplasm</keyword>
<keyword id="KW-0275">Fatty acid biosynthesis</keyword>
<keyword id="KW-0276">Fatty acid metabolism</keyword>
<keyword id="KW-0444">Lipid biosynthesis</keyword>
<keyword id="KW-0443">Lipid metabolism</keyword>
<keyword id="KW-0547">Nucleotide-binding</keyword>
<keyword id="KW-1185">Reference proteome</keyword>
<keyword id="KW-0808">Transferase</keyword>
<comment type="function">
    <text evidence="1">Component of the acetyl coenzyme A carboxylase (ACC) complex. Biotin carboxylase (BC) catalyzes the carboxylation of biotin on its carrier protein (BCCP) and then the CO(2) group is transferred by the transcarboxylase to acetyl-CoA to form malonyl-CoA.</text>
</comment>
<comment type="catalytic activity">
    <reaction evidence="1">
        <text>N(6)-carboxybiotinyl-L-lysyl-[protein] + acetyl-CoA = N(6)-biotinyl-L-lysyl-[protein] + malonyl-CoA</text>
        <dbReference type="Rhea" id="RHEA:54728"/>
        <dbReference type="Rhea" id="RHEA-COMP:10505"/>
        <dbReference type="Rhea" id="RHEA-COMP:10506"/>
        <dbReference type="ChEBI" id="CHEBI:57288"/>
        <dbReference type="ChEBI" id="CHEBI:57384"/>
        <dbReference type="ChEBI" id="CHEBI:83144"/>
        <dbReference type="ChEBI" id="CHEBI:83145"/>
        <dbReference type="EC" id="2.1.3.15"/>
    </reaction>
</comment>
<comment type="pathway">
    <text evidence="1">Lipid metabolism; malonyl-CoA biosynthesis; malonyl-CoA from acetyl-CoA: step 1/1.</text>
</comment>
<comment type="subunit">
    <text evidence="1">Acetyl-CoA carboxylase is a heterohexamer composed of biotin carboxyl carrier protein (AccB), biotin carboxylase (AccC) and two subunits each of ACCase subunit alpha (AccA) and ACCase subunit beta (AccD).</text>
</comment>
<comment type="subcellular location">
    <subcellularLocation>
        <location evidence="1">Cytoplasm</location>
    </subcellularLocation>
</comment>
<comment type="similarity">
    <text evidence="1">Belongs to the AccD/PCCB family.</text>
</comment>